<name>NR2E1_HUMAN</name>
<dbReference type="EMBL" id="Y13276">
    <property type="protein sequence ID" value="CAA73725.1"/>
    <property type="molecule type" value="mRNA"/>
</dbReference>
<dbReference type="EMBL" id="AF220532">
    <property type="protein sequence ID" value="AAG31945.1"/>
    <property type="molecule type" value="mRNA"/>
</dbReference>
<dbReference type="EMBL" id="AF411525">
    <property type="protein sequence ID" value="AAL05871.1"/>
    <property type="molecule type" value="mRNA"/>
</dbReference>
<dbReference type="EMBL" id="AK131541">
    <property type="protein sequence ID" value="BAD18677.1"/>
    <property type="molecule type" value="mRNA"/>
</dbReference>
<dbReference type="EMBL" id="AL078596">
    <property type="status" value="NOT_ANNOTATED_CDS"/>
    <property type="molecule type" value="Genomic_DNA"/>
</dbReference>
<dbReference type="EMBL" id="CH471051">
    <property type="protein sequence ID" value="EAW48386.1"/>
    <property type="molecule type" value="Genomic_DNA"/>
</dbReference>
<dbReference type="EMBL" id="BC028031">
    <property type="protein sequence ID" value="AAH28031.1"/>
    <property type="molecule type" value="mRNA"/>
</dbReference>
<dbReference type="CCDS" id="CCDS5063.1">
    <molecule id="Q9Y466-1"/>
</dbReference>
<dbReference type="CCDS" id="CCDS69165.1">
    <molecule id="Q9Y466-2"/>
</dbReference>
<dbReference type="RefSeq" id="NP_001273031.1">
    <molecule id="Q9Y466-2"/>
    <property type="nucleotide sequence ID" value="NM_001286102.1"/>
</dbReference>
<dbReference type="RefSeq" id="NP_003260.1">
    <molecule id="Q9Y466-1"/>
    <property type="nucleotide sequence ID" value="NM_003269.5"/>
</dbReference>
<dbReference type="PDB" id="4XAJ">
    <property type="method" value="X-ray"/>
    <property type="resolution" value="3.55 A"/>
    <property type="chains" value="A/B/C/D=180-383"/>
</dbReference>
<dbReference type="PDBsum" id="4XAJ"/>
<dbReference type="SMR" id="Q9Y466"/>
<dbReference type="BioGRID" id="112956">
    <property type="interactions" value="37"/>
</dbReference>
<dbReference type="FunCoup" id="Q9Y466">
    <property type="interactions" value="1096"/>
</dbReference>
<dbReference type="IntAct" id="Q9Y466">
    <property type="interactions" value="15"/>
</dbReference>
<dbReference type="MINT" id="Q9Y466"/>
<dbReference type="STRING" id="9606.ENSP00000357979"/>
<dbReference type="BindingDB" id="Q9Y466"/>
<dbReference type="ChEMBL" id="CHEMBL1961788"/>
<dbReference type="DrugCentral" id="Q9Y466"/>
<dbReference type="GuidetoPHARMACOLOGY" id="615"/>
<dbReference type="iPTMnet" id="Q9Y466"/>
<dbReference type="PhosphoSitePlus" id="Q9Y466"/>
<dbReference type="BioMuta" id="NR2E1"/>
<dbReference type="DMDM" id="9910804"/>
<dbReference type="MassIVE" id="Q9Y466"/>
<dbReference type="PaxDb" id="9606-ENSP00000357979"/>
<dbReference type="PeptideAtlas" id="Q9Y466"/>
<dbReference type="ProteomicsDB" id="67899"/>
<dbReference type="ProteomicsDB" id="86113">
    <molecule id="Q9Y466-1"/>
</dbReference>
<dbReference type="Antibodypedia" id="19108">
    <property type="antibodies" value="303 antibodies from 33 providers"/>
</dbReference>
<dbReference type="DNASU" id="7101"/>
<dbReference type="Ensembl" id="ENST00000368983.3">
    <molecule id="Q9Y466-2"/>
    <property type="protein sequence ID" value="ENSP00000357979.3"/>
    <property type="gene ID" value="ENSG00000112333.12"/>
</dbReference>
<dbReference type="Ensembl" id="ENST00000368986.9">
    <molecule id="Q9Y466-1"/>
    <property type="protein sequence ID" value="ENSP00000357982.5"/>
    <property type="gene ID" value="ENSG00000112333.12"/>
</dbReference>
<dbReference type="GeneID" id="7101"/>
<dbReference type="KEGG" id="hsa:7101"/>
<dbReference type="MANE-Select" id="ENST00000368986.9">
    <property type="protein sequence ID" value="ENSP00000357982.5"/>
    <property type="RefSeq nucleotide sequence ID" value="NM_003269.5"/>
    <property type="RefSeq protein sequence ID" value="NP_003260.1"/>
</dbReference>
<dbReference type="UCSC" id="uc003psg.4">
    <molecule id="Q9Y466-1"/>
    <property type="organism name" value="human"/>
</dbReference>
<dbReference type="AGR" id="HGNC:7973"/>
<dbReference type="CTD" id="7101"/>
<dbReference type="DisGeNET" id="7101"/>
<dbReference type="GeneCards" id="NR2E1"/>
<dbReference type="HGNC" id="HGNC:7973">
    <property type="gene designation" value="NR2E1"/>
</dbReference>
<dbReference type="HPA" id="ENSG00000112333">
    <property type="expression patterns" value="Group enriched (brain, choroid plexus, retina)"/>
</dbReference>
<dbReference type="MalaCards" id="NR2E1"/>
<dbReference type="MIM" id="603849">
    <property type="type" value="gene"/>
</dbReference>
<dbReference type="neXtProt" id="NX_Q9Y466"/>
<dbReference type="OpenTargets" id="ENSG00000112333"/>
<dbReference type="PharmGKB" id="PA31756"/>
<dbReference type="VEuPathDB" id="HostDB:ENSG00000112333"/>
<dbReference type="eggNOG" id="KOG3575">
    <property type="taxonomic scope" value="Eukaryota"/>
</dbReference>
<dbReference type="GeneTree" id="ENSGT00940000156693"/>
<dbReference type="HOGENOM" id="CLU_007368_20_3_1"/>
<dbReference type="InParanoid" id="Q9Y466"/>
<dbReference type="OMA" id="IMGMVTR"/>
<dbReference type="OrthoDB" id="10045640at2759"/>
<dbReference type="PAN-GO" id="Q9Y466">
    <property type="GO annotations" value="5 GO annotations based on evolutionary models"/>
</dbReference>
<dbReference type="PhylomeDB" id="Q9Y466"/>
<dbReference type="TreeFam" id="TF315716"/>
<dbReference type="PathwayCommons" id="Q9Y466"/>
<dbReference type="Reactome" id="R-HSA-383280">
    <property type="pathway name" value="Nuclear Receptor transcription pathway"/>
</dbReference>
<dbReference type="Reactome" id="R-HSA-8943724">
    <property type="pathway name" value="Regulation of PTEN gene transcription"/>
</dbReference>
<dbReference type="SignaLink" id="Q9Y466"/>
<dbReference type="SIGNOR" id="Q9Y466"/>
<dbReference type="BioGRID-ORCS" id="7101">
    <property type="hits" value="11 hits in 1170 CRISPR screens"/>
</dbReference>
<dbReference type="ChiTaRS" id="NR2E1">
    <property type="organism name" value="human"/>
</dbReference>
<dbReference type="EvolutionaryTrace" id="Q9Y466"/>
<dbReference type="GeneWiki" id="TLX"/>
<dbReference type="GenomeRNAi" id="7101"/>
<dbReference type="Pharos" id="Q9Y466">
    <property type="development level" value="Tbio"/>
</dbReference>
<dbReference type="PRO" id="PR:Q9Y466"/>
<dbReference type="Proteomes" id="UP000005640">
    <property type="component" value="Chromosome 6"/>
</dbReference>
<dbReference type="RNAct" id="Q9Y466">
    <property type="molecule type" value="protein"/>
</dbReference>
<dbReference type="Bgee" id="ENSG00000112333">
    <property type="expression patterns" value="Expressed in ventricular zone and 59 other cell types or tissues"/>
</dbReference>
<dbReference type="ExpressionAtlas" id="Q9Y466">
    <property type="expression patterns" value="baseline and differential"/>
</dbReference>
<dbReference type="GO" id="GO:0000785">
    <property type="term" value="C:chromatin"/>
    <property type="evidence" value="ECO:0000247"/>
    <property type="project" value="NTNU_SB"/>
</dbReference>
<dbReference type="GO" id="GO:0005654">
    <property type="term" value="C:nucleoplasm"/>
    <property type="evidence" value="ECO:0000304"/>
    <property type="project" value="Reactome"/>
</dbReference>
<dbReference type="GO" id="GO:0001228">
    <property type="term" value="F:DNA-binding transcription activator activity, RNA polymerase II-specific"/>
    <property type="evidence" value="ECO:0007669"/>
    <property type="project" value="Ensembl"/>
</dbReference>
<dbReference type="GO" id="GO:0000981">
    <property type="term" value="F:DNA-binding transcription factor activity, RNA polymerase II-specific"/>
    <property type="evidence" value="ECO:0000247"/>
    <property type="project" value="NTNU_SB"/>
</dbReference>
<dbReference type="GO" id="GO:0001227">
    <property type="term" value="F:DNA-binding transcription repressor activity, RNA polymerase II-specific"/>
    <property type="evidence" value="ECO:0007669"/>
    <property type="project" value="Ensembl"/>
</dbReference>
<dbReference type="GO" id="GO:0042826">
    <property type="term" value="F:histone deacetylase binding"/>
    <property type="evidence" value="ECO:0007669"/>
    <property type="project" value="Ensembl"/>
</dbReference>
<dbReference type="GO" id="GO:0004879">
    <property type="term" value="F:nuclear receptor activity"/>
    <property type="evidence" value="ECO:0000318"/>
    <property type="project" value="GO_Central"/>
</dbReference>
<dbReference type="GO" id="GO:0003707">
    <property type="term" value="F:nuclear steroid receptor activity"/>
    <property type="evidence" value="ECO:0000304"/>
    <property type="project" value="ProtInc"/>
</dbReference>
<dbReference type="GO" id="GO:0000978">
    <property type="term" value="F:RNA polymerase II cis-regulatory region sequence-specific DNA binding"/>
    <property type="evidence" value="ECO:0000318"/>
    <property type="project" value="GO_Central"/>
</dbReference>
<dbReference type="GO" id="GO:1990837">
    <property type="term" value="F:sequence-specific double-stranded DNA binding"/>
    <property type="evidence" value="ECO:0000314"/>
    <property type="project" value="ARUK-UCL"/>
</dbReference>
<dbReference type="GO" id="GO:0008270">
    <property type="term" value="F:zinc ion binding"/>
    <property type="evidence" value="ECO:0007669"/>
    <property type="project" value="UniProtKB-KW"/>
</dbReference>
<dbReference type="GO" id="GO:0002118">
    <property type="term" value="P:aggressive behavior"/>
    <property type="evidence" value="ECO:0007669"/>
    <property type="project" value="Ensembl"/>
</dbReference>
<dbReference type="GO" id="GO:0021764">
    <property type="term" value="P:amygdala development"/>
    <property type="evidence" value="ECO:0007669"/>
    <property type="project" value="Ensembl"/>
</dbReference>
<dbReference type="GO" id="GO:0001525">
    <property type="term" value="P:angiogenesis"/>
    <property type="evidence" value="ECO:0007669"/>
    <property type="project" value="Ensembl"/>
</dbReference>
<dbReference type="GO" id="GO:0021960">
    <property type="term" value="P:anterior commissure morphogenesis"/>
    <property type="evidence" value="ECO:0007669"/>
    <property type="project" value="Ensembl"/>
</dbReference>
<dbReference type="GO" id="GO:0006915">
    <property type="term" value="P:apoptotic process"/>
    <property type="evidence" value="ECO:0007669"/>
    <property type="project" value="Ensembl"/>
</dbReference>
<dbReference type="GO" id="GO:0043615">
    <property type="term" value="P:astrocyte cell migration"/>
    <property type="evidence" value="ECO:0007669"/>
    <property type="project" value="Ensembl"/>
</dbReference>
<dbReference type="GO" id="GO:0048708">
    <property type="term" value="P:astrocyte differentiation"/>
    <property type="evidence" value="ECO:0007669"/>
    <property type="project" value="Ensembl"/>
</dbReference>
<dbReference type="GO" id="GO:0001662">
    <property type="term" value="P:behavioral fear response"/>
    <property type="evidence" value="ECO:0007669"/>
    <property type="project" value="Ensembl"/>
</dbReference>
<dbReference type="GO" id="GO:0030154">
    <property type="term" value="P:cell differentiation"/>
    <property type="evidence" value="ECO:0000318"/>
    <property type="project" value="GO_Central"/>
</dbReference>
<dbReference type="GO" id="GO:0045165">
    <property type="term" value="P:cell fate commitment"/>
    <property type="evidence" value="ECO:0007669"/>
    <property type="project" value="Ensembl"/>
</dbReference>
<dbReference type="GO" id="GO:0021895">
    <property type="term" value="P:cerebral cortex neuron differentiation"/>
    <property type="evidence" value="ECO:0007669"/>
    <property type="project" value="Ensembl"/>
</dbReference>
<dbReference type="GO" id="GO:0021542">
    <property type="term" value="P:dentate gyrus development"/>
    <property type="evidence" value="ECO:0007669"/>
    <property type="project" value="Ensembl"/>
</dbReference>
<dbReference type="GO" id="GO:0030198">
    <property type="term" value="P:extracellular matrix organization"/>
    <property type="evidence" value="ECO:0007669"/>
    <property type="project" value="Ensembl"/>
</dbReference>
<dbReference type="GO" id="GO:0021819">
    <property type="term" value="P:layer formation in cerebral cortex"/>
    <property type="evidence" value="ECO:0007669"/>
    <property type="project" value="Ensembl"/>
</dbReference>
<dbReference type="GO" id="GO:0060291">
    <property type="term" value="P:long-term synaptic potentiation"/>
    <property type="evidence" value="ECO:0007669"/>
    <property type="project" value="Ensembl"/>
</dbReference>
<dbReference type="GO" id="GO:0043066">
    <property type="term" value="P:negative regulation of apoptotic process"/>
    <property type="evidence" value="ECO:0007669"/>
    <property type="project" value="Ensembl"/>
</dbReference>
<dbReference type="GO" id="GO:0048712">
    <property type="term" value="P:negative regulation of astrocyte differentiation"/>
    <property type="evidence" value="ECO:0007669"/>
    <property type="project" value="Ensembl"/>
</dbReference>
<dbReference type="GO" id="GO:2000178">
    <property type="term" value="P:negative regulation of neural precursor cell proliferation"/>
    <property type="evidence" value="ECO:0007669"/>
    <property type="project" value="Ensembl"/>
</dbReference>
<dbReference type="GO" id="GO:0045665">
    <property type="term" value="P:negative regulation of neuron differentiation"/>
    <property type="evidence" value="ECO:0007669"/>
    <property type="project" value="Ensembl"/>
</dbReference>
<dbReference type="GO" id="GO:0000122">
    <property type="term" value="P:negative regulation of transcription by RNA polymerase II"/>
    <property type="evidence" value="ECO:0000318"/>
    <property type="project" value="GO_Central"/>
</dbReference>
<dbReference type="GO" id="GO:0007399">
    <property type="term" value="P:nervous system development"/>
    <property type="evidence" value="ECO:0000304"/>
    <property type="project" value="ProtInc"/>
</dbReference>
<dbReference type="GO" id="GO:0007405">
    <property type="term" value="P:neuroblast proliferation"/>
    <property type="evidence" value="ECO:0007669"/>
    <property type="project" value="Ensembl"/>
</dbReference>
<dbReference type="GO" id="GO:0021772">
    <property type="term" value="P:olfactory bulb development"/>
    <property type="evidence" value="ECO:0007669"/>
    <property type="project" value="Ensembl"/>
</dbReference>
<dbReference type="GO" id="GO:0045766">
    <property type="term" value="P:positive regulation of angiogenesis"/>
    <property type="evidence" value="ECO:0007669"/>
    <property type="project" value="Ensembl"/>
</dbReference>
<dbReference type="GO" id="GO:0045787">
    <property type="term" value="P:positive regulation of cell cycle"/>
    <property type="evidence" value="ECO:0007669"/>
    <property type="project" value="Ensembl"/>
</dbReference>
<dbReference type="GO" id="GO:0002052">
    <property type="term" value="P:positive regulation of neuroblast proliferation"/>
    <property type="evidence" value="ECO:0007669"/>
    <property type="project" value="Ensembl"/>
</dbReference>
<dbReference type="GO" id="GO:2000648">
    <property type="term" value="P:positive regulation of stem cell proliferation"/>
    <property type="evidence" value="ECO:0007669"/>
    <property type="project" value="Ensembl"/>
</dbReference>
<dbReference type="GO" id="GO:0090049">
    <property type="term" value="P:regulation of cell migration involved in sprouting angiogenesis"/>
    <property type="evidence" value="ECO:0007669"/>
    <property type="project" value="Ensembl"/>
</dbReference>
<dbReference type="GO" id="GO:0048814">
    <property type="term" value="P:regulation of dendrite morphogenesis"/>
    <property type="evidence" value="ECO:0007669"/>
    <property type="project" value="Ensembl"/>
</dbReference>
<dbReference type="GO" id="GO:0060164">
    <property type="term" value="P:regulation of timing of neuron differentiation"/>
    <property type="evidence" value="ECO:0007669"/>
    <property type="project" value="Ensembl"/>
</dbReference>
<dbReference type="GO" id="GO:0060041">
    <property type="term" value="P:retina development in camera-type eye"/>
    <property type="evidence" value="ECO:0007669"/>
    <property type="project" value="Ensembl"/>
</dbReference>
<dbReference type="GO" id="GO:0035176">
    <property type="term" value="P:social behavior"/>
    <property type="evidence" value="ECO:0007669"/>
    <property type="project" value="Ensembl"/>
</dbReference>
<dbReference type="GO" id="GO:0035019">
    <property type="term" value="P:somatic stem cell population maintenance"/>
    <property type="evidence" value="ECO:0007669"/>
    <property type="project" value="Ensembl"/>
</dbReference>
<dbReference type="GO" id="GO:0007601">
    <property type="term" value="P:visual perception"/>
    <property type="evidence" value="ECO:0007669"/>
    <property type="project" value="Ensembl"/>
</dbReference>
<dbReference type="CDD" id="cd07163">
    <property type="entry name" value="NR_DBD_TLX"/>
    <property type="match status" value="1"/>
</dbReference>
<dbReference type="CDD" id="cd06950">
    <property type="entry name" value="NR_LBD_Tlx_PNR_like"/>
    <property type="match status" value="1"/>
</dbReference>
<dbReference type="FunFam" id="3.30.50.10:FF:000019">
    <property type="entry name" value="Nuclear receptor subfamily 2 group E member"/>
    <property type="match status" value="1"/>
</dbReference>
<dbReference type="FunFam" id="1.10.565.10:FF:000019">
    <property type="entry name" value="Nuclear receptor subfamily 2 group E member 1"/>
    <property type="match status" value="1"/>
</dbReference>
<dbReference type="Gene3D" id="3.30.50.10">
    <property type="entry name" value="Erythroid Transcription Factor GATA-1, subunit A"/>
    <property type="match status" value="1"/>
</dbReference>
<dbReference type="Gene3D" id="1.10.565.10">
    <property type="entry name" value="Retinoid X Receptor"/>
    <property type="match status" value="1"/>
</dbReference>
<dbReference type="InterPro" id="IPR035500">
    <property type="entry name" value="NHR-like_dom_sf"/>
</dbReference>
<dbReference type="InterPro" id="IPR000536">
    <property type="entry name" value="Nucl_hrmn_rcpt_lig-bd"/>
</dbReference>
<dbReference type="InterPro" id="IPR050274">
    <property type="entry name" value="Nuclear_hormone_rcpt_NR2"/>
</dbReference>
<dbReference type="InterPro" id="IPR001723">
    <property type="entry name" value="Nuclear_hrmn_rcpt"/>
</dbReference>
<dbReference type="InterPro" id="IPR001628">
    <property type="entry name" value="Znf_hrmn_rcpt"/>
</dbReference>
<dbReference type="InterPro" id="IPR013088">
    <property type="entry name" value="Znf_NHR/GATA"/>
</dbReference>
<dbReference type="PANTHER" id="PTHR24083">
    <property type="entry name" value="NUCLEAR HORMONE RECEPTOR"/>
    <property type="match status" value="1"/>
</dbReference>
<dbReference type="Pfam" id="PF00104">
    <property type="entry name" value="Hormone_recep"/>
    <property type="match status" value="1"/>
</dbReference>
<dbReference type="Pfam" id="PF00105">
    <property type="entry name" value="zf-C4"/>
    <property type="match status" value="1"/>
</dbReference>
<dbReference type="PRINTS" id="PR00398">
    <property type="entry name" value="STRDHORMONER"/>
</dbReference>
<dbReference type="PRINTS" id="PR00047">
    <property type="entry name" value="STROIDFINGER"/>
</dbReference>
<dbReference type="SMART" id="SM00430">
    <property type="entry name" value="HOLI"/>
    <property type="match status" value="1"/>
</dbReference>
<dbReference type="SMART" id="SM00399">
    <property type="entry name" value="ZnF_C4"/>
    <property type="match status" value="1"/>
</dbReference>
<dbReference type="SUPFAM" id="SSF57716">
    <property type="entry name" value="Glucocorticoid receptor-like (DNA-binding domain)"/>
    <property type="match status" value="1"/>
</dbReference>
<dbReference type="SUPFAM" id="SSF48508">
    <property type="entry name" value="Nuclear receptor ligand-binding domain"/>
    <property type="match status" value="1"/>
</dbReference>
<dbReference type="PROSITE" id="PS51843">
    <property type="entry name" value="NR_LBD"/>
    <property type="match status" value="1"/>
</dbReference>
<dbReference type="PROSITE" id="PS00031">
    <property type="entry name" value="NUCLEAR_REC_DBD_1"/>
    <property type="match status" value="1"/>
</dbReference>
<dbReference type="PROSITE" id="PS51030">
    <property type="entry name" value="NUCLEAR_REC_DBD_2"/>
    <property type="match status" value="1"/>
</dbReference>
<comment type="function">
    <text evidence="1">Orphan receptor that binds DNA as a monomer to hormone response elements (HRE) containing an extended core motif half-site sequence 5'-AAGGTCA-3' in which the 5' flanking nucleotides participate in determining receptor specificity (By similarity). May be required to pattern anterior brain differentiation. Involved in the regulation of retinal development and essential for vision. During retinogenesis, regulates PTEN-Cyclin D expression via binding to the promoter region of PTEN and suppressing its activity (By similarity). May be involved in retinoic acid receptor (RAR) regulation in retinal cells.</text>
</comment>
<comment type="subunit">
    <text evidence="1">Monomer. Interacts with ATN1; the interaction represses the transcription.</text>
</comment>
<comment type="interaction">
    <interactant intactId="EBI-11792373">
        <id>Q9Y466</id>
    </interactant>
    <interactant intactId="EBI-710124">
        <id>O60341</id>
        <label>KDM1A</label>
    </interactant>
    <organismsDiffer>false</organismsDiffer>
    <experiments>7</experiments>
</comment>
<comment type="subcellular location">
    <subcellularLocation>
        <location evidence="2">Nucleus</location>
    </subcellularLocation>
</comment>
<comment type="alternative products">
    <event type="alternative splicing"/>
    <isoform>
        <id>Q9Y466-1</id>
        <name>1</name>
        <sequence type="displayed"/>
    </isoform>
    <isoform>
        <id>Q9Y466-2</id>
        <name>2</name>
        <sequence type="described" ref="VSP_054639"/>
    </isoform>
</comment>
<comment type="tissue specificity">
    <text evidence="4">Brain specific. Present in all brain sections tested, highest levels in the caudate nucleus and hippocampus, weakest levels in the thalamus.</text>
</comment>
<comment type="similarity">
    <text evidence="6">Belongs to the nuclear hormone receptor family. NR2 subfamily.</text>
</comment>
<feature type="chain" id="PRO_0000053592" description="Nuclear receptor subfamily 2 group E member 1">
    <location>
        <begin position="1"/>
        <end position="385"/>
    </location>
</feature>
<feature type="domain" description="NR LBD" evidence="3">
    <location>
        <begin position="155"/>
        <end position="383"/>
    </location>
</feature>
<feature type="DNA-binding region" description="Nuclear receptor" evidence="2">
    <location>
        <begin position="13"/>
        <end position="90"/>
    </location>
</feature>
<feature type="zinc finger region" description="NR C4-type" evidence="2">
    <location>
        <begin position="16"/>
        <end position="36"/>
    </location>
</feature>
<feature type="zinc finger region" description="NR C4-type" evidence="2">
    <location>
        <begin position="52"/>
        <end position="78"/>
    </location>
</feature>
<feature type="region of interest" description="Required for transcriptional repression" evidence="1">
    <location>
        <begin position="341"/>
        <end position="385"/>
    </location>
</feature>
<feature type="splice variant" id="VSP_054639" description="In isoform 2." evidence="5">
    <original>MSKPAGSTS</original>
    <variation>MFRAGAEGAEKEPSPRPECRADPGPGLGFPLGSGLPWPSLLESPGG</variation>
    <location>
        <begin position="1"/>
        <end position="9"/>
    </location>
</feature>
<reference key="1">
    <citation type="journal article" date="1998" name="Genomics">
        <title>The human homologue of the Drosophila tailless gene (TLX): characterization and mapping to a region of common deletion in human lymphoid leukemia on chromosome 6q21.</title>
        <authorList>
            <person name="Jackson A."/>
            <person name="Panayiotidis P."/>
            <person name="Foroni L."/>
        </authorList>
    </citation>
    <scope>NUCLEOTIDE SEQUENCE [MRNA] (ISOFORM 1)</scope>
    <scope>TISSUE SPECIFICITY</scope>
    <source>
        <tissue>Fetal brain</tissue>
    </source>
</reference>
<reference key="2">
    <citation type="journal article" date="2000" name="Mol. Cell. Biol.">
        <title>Cell-type-specific regulation of the retinoic acid receptor mediated by the orphan nuclear receptor TLX.</title>
        <authorList>
            <person name="Kobayashi M."/>
            <person name="Yu R.T."/>
            <person name="Yasuda K."/>
            <person name="Umesono K."/>
        </authorList>
    </citation>
    <scope>NUCLEOTIDE SEQUENCE [MRNA] (ISOFORM 1)</scope>
    <scope>POSSIBLE FUNCTION</scope>
    <source>
        <tissue>Brain</tissue>
    </source>
</reference>
<reference key="3">
    <citation type="submission" date="2001-08" db="EMBL/GenBank/DDBJ databases">
        <authorList>
            <person name="Hua F."/>
            <person name="Wu J."/>
            <person name="Zhang B."/>
            <person name="Peng X."/>
            <person name="Yuan J."/>
            <person name="Qiang B."/>
        </authorList>
    </citation>
    <scope>NUCLEOTIDE SEQUENCE [MRNA] (ISOFORM 1)</scope>
</reference>
<reference key="4">
    <citation type="journal article" date="2004" name="Nat. Genet.">
        <title>Complete sequencing and characterization of 21,243 full-length human cDNAs.</title>
        <authorList>
            <person name="Ota T."/>
            <person name="Suzuki Y."/>
            <person name="Nishikawa T."/>
            <person name="Otsuki T."/>
            <person name="Sugiyama T."/>
            <person name="Irie R."/>
            <person name="Wakamatsu A."/>
            <person name="Hayashi K."/>
            <person name="Sato H."/>
            <person name="Nagai K."/>
            <person name="Kimura K."/>
            <person name="Makita H."/>
            <person name="Sekine M."/>
            <person name="Obayashi M."/>
            <person name="Nishi T."/>
            <person name="Shibahara T."/>
            <person name="Tanaka T."/>
            <person name="Ishii S."/>
            <person name="Yamamoto J."/>
            <person name="Saito K."/>
            <person name="Kawai Y."/>
            <person name="Isono Y."/>
            <person name="Nakamura Y."/>
            <person name="Nagahari K."/>
            <person name="Murakami K."/>
            <person name="Yasuda T."/>
            <person name="Iwayanagi T."/>
            <person name="Wagatsuma M."/>
            <person name="Shiratori A."/>
            <person name="Sudo H."/>
            <person name="Hosoiri T."/>
            <person name="Kaku Y."/>
            <person name="Kodaira H."/>
            <person name="Kondo H."/>
            <person name="Sugawara M."/>
            <person name="Takahashi M."/>
            <person name="Kanda K."/>
            <person name="Yokoi T."/>
            <person name="Furuya T."/>
            <person name="Kikkawa E."/>
            <person name="Omura Y."/>
            <person name="Abe K."/>
            <person name="Kamihara K."/>
            <person name="Katsuta N."/>
            <person name="Sato K."/>
            <person name="Tanikawa M."/>
            <person name="Yamazaki M."/>
            <person name="Ninomiya K."/>
            <person name="Ishibashi T."/>
            <person name="Yamashita H."/>
            <person name="Murakawa K."/>
            <person name="Fujimori K."/>
            <person name="Tanai H."/>
            <person name="Kimata M."/>
            <person name="Watanabe M."/>
            <person name="Hiraoka S."/>
            <person name="Chiba Y."/>
            <person name="Ishida S."/>
            <person name="Ono Y."/>
            <person name="Takiguchi S."/>
            <person name="Watanabe S."/>
            <person name="Yosida M."/>
            <person name="Hotuta T."/>
            <person name="Kusano J."/>
            <person name="Kanehori K."/>
            <person name="Takahashi-Fujii A."/>
            <person name="Hara H."/>
            <person name="Tanase T.-O."/>
            <person name="Nomura Y."/>
            <person name="Togiya S."/>
            <person name="Komai F."/>
            <person name="Hara R."/>
            <person name="Takeuchi K."/>
            <person name="Arita M."/>
            <person name="Imose N."/>
            <person name="Musashino K."/>
            <person name="Yuuki H."/>
            <person name="Oshima A."/>
            <person name="Sasaki N."/>
            <person name="Aotsuka S."/>
            <person name="Yoshikawa Y."/>
            <person name="Matsunawa H."/>
            <person name="Ichihara T."/>
            <person name="Shiohata N."/>
            <person name="Sano S."/>
            <person name="Moriya S."/>
            <person name="Momiyama H."/>
            <person name="Satoh N."/>
            <person name="Takami S."/>
            <person name="Terashima Y."/>
            <person name="Suzuki O."/>
            <person name="Nakagawa S."/>
            <person name="Senoh A."/>
            <person name="Mizoguchi H."/>
            <person name="Goto Y."/>
            <person name="Shimizu F."/>
            <person name="Wakebe H."/>
            <person name="Hishigaki H."/>
            <person name="Watanabe T."/>
            <person name="Sugiyama A."/>
            <person name="Takemoto M."/>
            <person name="Kawakami B."/>
            <person name="Yamazaki M."/>
            <person name="Watanabe K."/>
            <person name="Kumagai A."/>
            <person name="Itakura S."/>
            <person name="Fukuzumi Y."/>
            <person name="Fujimori Y."/>
            <person name="Komiyama M."/>
            <person name="Tashiro H."/>
            <person name="Tanigami A."/>
            <person name="Fujiwara T."/>
            <person name="Ono T."/>
            <person name="Yamada K."/>
            <person name="Fujii Y."/>
            <person name="Ozaki K."/>
            <person name="Hirao M."/>
            <person name="Ohmori Y."/>
            <person name="Kawabata A."/>
            <person name="Hikiji T."/>
            <person name="Kobatake N."/>
            <person name="Inagaki H."/>
            <person name="Ikema Y."/>
            <person name="Okamoto S."/>
            <person name="Okitani R."/>
            <person name="Kawakami T."/>
            <person name="Noguchi S."/>
            <person name="Itoh T."/>
            <person name="Shigeta K."/>
            <person name="Senba T."/>
            <person name="Matsumura K."/>
            <person name="Nakajima Y."/>
            <person name="Mizuno T."/>
            <person name="Morinaga M."/>
            <person name="Sasaki M."/>
            <person name="Togashi T."/>
            <person name="Oyama M."/>
            <person name="Hata H."/>
            <person name="Watanabe M."/>
            <person name="Komatsu T."/>
            <person name="Mizushima-Sugano J."/>
            <person name="Satoh T."/>
            <person name="Shirai Y."/>
            <person name="Takahashi Y."/>
            <person name="Nakagawa K."/>
            <person name="Okumura K."/>
            <person name="Nagase T."/>
            <person name="Nomura N."/>
            <person name="Kikuchi H."/>
            <person name="Masuho Y."/>
            <person name="Yamashita R."/>
            <person name="Nakai K."/>
            <person name="Yada T."/>
            <person name="Nakamura Y."/>
            <person name="Ohara O."/>
            <person name="Isogai T."/>
            <person name="Sugano S."/>
        </authorList>
    </citation>
    <scope>NUCLEOTIDE SEQUENCE [LARGE SCALE MRNA] (ISOFORM 2)</scope>
    <source>
        <tissue>Caudate nucleus</tissue>
    </source>
</reference>
<reference key="5">
    <citation type="journal article" date="2003" name="Nature">
        <title>The DNA sequence and analysis of human chromosome 6.</title>
        <authorList>
            <person name="Mungall A.J."/>
            <person name="Palmer S.A."/>
            <person name="Sims S.K."/>
            <person name="Edwards C.A."/>
            <person name="Ashurst J.L."/>
            <person name="Wilming L."/>
            <person name="Jones M.C."/>
            <person name="Horton R."/>
            <person name="Hunt S.E."/>
            <person name="Scott C.E."/>
            <person name="Gilbert J.G.R."/>
            <person name="Clamp M.E."/>
            <person name="Bethel G."/>
            <person name="Milne S."/>
            <person name="Ainscough R."/>
            <person name="Almeida J.P."/>
            <person name="Ambrose K.D."/>
            <person name="Andrews T.D."/>
            <person name="Ashwell R.I.S."/>
            <person name="Babbage A.K."/>
            <person name="Bagguley C.L."/>
            <person name="Bailey J."/>
            <person name="Banerjee R."/>
            <person name="Barker D.J."/>
            <person name="Barlow K.F."/>
            <person name="Bates K."/>
            <person name="Beare D.M."/>
            <person name="Beasley H."/>
            <person name="Beasley O."/>
            <person name="Bird C.P."/>
            <person name="Blakey S.E."/>
            <person name="Bray-Allen S."/>
            <person name="Brook J."/>
            <person name="Brown A.J."/>
            <person name="Brown J.Y."/>
            <person name="Burford D.C."/>
            <person name="Burrill W."/>
            <person name="Burton J."/>
            <person name="Carder C."/>
            <person name="Carter N.P."/>
            <person name="Chapman J.C."/>
            <person name="Clark S.Y."/>
            <person name="Clark G."/>
            <person name="Clee C.M."/>
            <person name="Clegg S."/>
            <person name="Cobley V."/>
            <person name="Collier R.E."/>
            <person name="Collins J.E."/>
            <person name="Colman L.K."/>
            <person name="Corby N.R."/>
            <person name="Coville G.J."/>
            <person name="Culley K.M."/>
            <person name="Dhami P."/>
            <person name="Davies J."/>
            <person name="Dunn M."/>
            <person name="Earthrowl M.E."/>
            <person name="Ellington A.E."/>
            <person name="Evans K.A."/>
            <person name="Faulkner L."/>
            <person name="Francis M.D."/>
            <person name="Frankish A."/>
            <person name="Frankland J."/>
            <person name="French L."/>
            <person name="Garner P."/>
            <person name="Garnett J."/>
            <person name="Ghori M.J."/>
            <person name="Gilby L.M."/>
            <person name="Gillson C.J."/>
            <person name="Glithero R.J."/>
            <person name="Grafham D.V."/>
            <person name="Grant M."/>
            <person name="Gribble S."/>
            <person name="Griffiths C."/>
            <person name="Griffiths M.N.D."/>
            <person name="Hall R."/>
            <person name="Halls K.S."/>
            <person name="Hammond S."/>
            <person name="Harley J.L."/>
            <person name="Hart E.A."/>
            <person name="Heath P.D."/>
            <person name="Heathcott R."/>
            <person name="Holmes S.J."/>
            <person name="Howden P.J."/>
            <person name="Howe K.L."/>
            <person name="Howell G.R."/>
            <person name="Huckle E."/>
            <person name="Humphray S.J."/>
            <person name="Humphries M.D."/>
            <person name="Hunt A.R."/>
            <person name="Johnson C.M."/>
            <person name="Joy A.A."/>
            <person name="Kay M."/>
            <person name="Keenan S.J."/>
            <person name="Kimberley A.M."/>
            <person name="King A."/>
            <person name="Laird G.K."/>
            <person name="Langford C."/>
            <person name="Lawlor S."/>
            <person name="Leongamornlert D.A."/>
            <person name="Leversha M."/>
            <person name="Lloyd C.R."/>
            <person name="Lloyd D.M."/>
            <person name="Loveland J.E."/>
            <person name="Lovell J."/>
            <person name="Martin S."/>
            <person name="Mashreghi-Mohammadi M."/>
            <person name="Maslen G.L."/>
            <person name="Matthews L."/>
            <person name="McCann O.T."/>
            <person name="McLaren S.J."/>
            <person name="McLay K."/>
            <person name="McMurray A."/>
            <person name="Moore M.J.F."/>
            <person name="Mullikin J.C."/>
            <person name="Niblett D."/>
            <person name="Nickerson T."/>
            <person name="Novik K.L."/>
            <person name="Oliver K."/>
            <person name="Overton-Larty E.K."/>
            <person name="Parker A."/>
            <person name="Patel R."/>
            <person name="Pearce A.V."/>
            <person name="Peck A.I."/>
            <person name="Phillimore B.J.C.T."/>
            <person name="Phillips S."/>
            <person name="Plumb R.W."/>
            <person name="Porter K.M."/>
            <person name="Ramsey Y."/>
            <person name="Ranby S.A."/>
            <person name="Rice C.M."/>
            <person name="Ross M.T."/>
            <person name="Searle S.M."/>
            <person name="Sehra H.K."/>
            <person name="Sheridan E."/>
            <person name="Skuce C.D."/>
            <person name="Smith S."/>
            <person name="Smith M."/>
            <person name="Spraggon L."/>
            <person name="Squares S.L."/>
            <person name="Steward C.A."/>
            <person name="Sycamore N."/>
            <person name="Tamlyn-Hall G."/>
            <person name="Tester J."/>
            <person name="Theaker A.J."/>
            <person name="Thomas D.W."/>
            <person name="Thorpe A."/>
            <person name="Tracey A."/>
            <person name="Tromans A."/>
            <person name="Tubby B."/>
            <person name="Wall M."/>
            <person name="Wallis J.M."/>
            <person name="West A.P."/>
            <person name="White S.S."/>
            <person name="Whitehead S.L."/>
            <person name="Whittaker H."/>
            <person name="Wild A."/>
            <person name="Willey D.J."/>
            <person name="Wilmer T.E."/>
            <person name="Wood J.M."/>
            <person name="Wray P.W."/>
            <person name="Wyatt J.C."/>
            <person name="Young L."/>
            <person name="Younger R.M."/>
            <person name="Bentley D.R."/>
            <person name="Coulson A."/>
            <person name="Durbin R.M."/>
            <person name="Hubbard T."/>
            <person name="Sulston J.E."/>
            <person name="Dunham I."/>
            <person name="Rogers J."/>
            <person name="Beck S."/>
        </authorList>
    </citation>
    <scope>NUCLEOTIDE SEQUENCE [LARGE SCALE GENOMIC DNA]</scope>
</reference>
<reference key="6">
    <citation type="submission" date="2005-09" db="EMBL/GenBank/DDBJ databases">
        <authorList>
            <person name="Mural R.J."/>
            <person name="Istrail S."/>
            <person name="Sutton G."/>
            <person name="Florea L."/>
            <person name="Halpern A.L."/>
            <person name="Mobarry C.M."/>
            <person name="Lippert R."/>
            <person name="Walenz B."/>
            <person name="Shatkay H."/>
            <person name="Dew I."/>
            <person name="Miller J.R."/>
            <person name="Flanigan M.J."/>
            <person name="Edwards N.J."/>
            <person name="Bolanos R."/>
            <person name="Fasulo D."/>
            <person name="Halldorsson B.V."/>
            <person name="Hannenhalli S."/>
            <person name="Turner R."/>
            <person name="Yooseph S."/>
            <person name="Lu F."/>
            <person name="Nusskern D.R."/>
            <person name="Shue B.C."/>
            <person name="Zheng X.H."/>
            <person name="Zhong F."/>
            <person name="Delcher A.L."/>
            <person name="Huson D.H."/>
            <person name="Kravitz S.A."/>
            <person name="Mouchard L."/>
            <person name="Reinert K."/>
            <person name="Remington K.A."/>
            <person name="Clark A.G."/>
            <person name="Waterman M.S."/>
            <person name="Eichler E.E."/>
            <person name="Adams M.D."/>
            <person name="Hunkapiller M.W."/>
            <person name="Myers E.W."/>
            <person name="Venter J.C."/>
        </authorList>
    </citation>
    <scope>NUCLEOTIDE SEQUENCE [LARGE SCALE GENOMIC DNA]</scope>
</reference>
<reference key="7">
    <citation type="journal article" date="2004" name="Genome Res.">
        <title>The status, quality, and expansion of the NIH full-length cDNA project: the Mammalian Gene Collection (MGC).</title>
        <authorList>
            <consortium name="The MGC Project Team"/>
        </authorList>
    </citation>
    <scope>NUCLEOTIDE SEQUENCE [LARGE SCALE MRNA] (ISOFORM 1)</scope>
    <source>
        <tissue>Brain</tissue>
    </source>
</reference>
<protein>
    <recommendedName>
        <fullName>Nuclear receptor subfamily 2 group E member 1</fullName>
    </recommendedName>
    <alternativeName>
        <fullName>Nuclear receptor TLX</fullName>
    </alternativeName>
    <alternativeName>
        <fullName>Protein tailless homolog</fullName>
        <shortName>Tll</shortName>
        <shortName>hTll</shortName>
    </alternativeName>
</protein>
<proteinExistence type="evidence at protein level"/>
<accession>Q9Y466</accession>
<accession>Q6ZMP8</accession>
<sequence>MSKPAGSTSRILDIPCKVCGDRSSGKHYGVYACDGCSGFFKRSIRRNRTYVCKSGNQGGCPVDKTHRNQCRACRLKKCLEVNMNKDAVQHERGPRTSTIRKQVALYFRGHKEENGAAAHFPSAALPAPAFFTAVTQLEPHGLELAAVSTTPERQTLVSLAQPTPKYPHEVNGTPMYLYEVATESVCESAARLLFMSIKWAKSVPAFSTLSLQDQLMLLEDAWRELFVLGIAQWAIPVDANTLLAVSGMNGDNTDSQKLNKIISEIQALQEVVARFRQLRLDATEFACLKCIVTFKAVPTHSGSELRSFRNAAAIAALQDEAQLTLNSYIHTRYPTQPCRFGKLLLLLPALRSISPSTIEEVFFKKTIGNVPITRLLSDMYKSSDI</sequence>
<gene>
    <name type="primary">NR2E1</name>
    <name type="synonym">TLX</name>
</gene>
<evidence type="ECO:0000250" key="1"/>
<evidence type="ECO:0000255" key="2">
    <source>
        <dbReference type="PROSITE-ProRule" id="PRU00407"/>
    </source>
</evidence>
<evidence type="ECO:0000255" key="3">
    <source>
        <dbReference type="PROSITE-ProRule" id="PRU01189"/>
    </source>
</evidence>
<evidence type="ECO:0000269" key="4">
    <source>
    </source>
</evidence>
<evidence type="ECO:0000303" key="5">
    <source>
    </source>
</evidence>
<evidence type="ECO:0000305" key="6"/>
<organism>
    <name type="scientific">Homo sapiens</name>
    <name type="common">Human</name>
    <dbReference type="NCBI Taxonomy" id="9606"/>
    <lineage>
        <taxon>Eukaryota</taxon>
        <taxon>Metazoa</taxon>
        <taxon>Chordata</taxon>
        <taxon>Craniata</taxon>
        <taxon>Vertebrata</taxon>
        <taxon>Euteleostomi</taxon>
        <taxon>Mammalia</taxon>
        <taxon>Eutheria</taxon>
        <taxon>Euarchontoglires</taxon>
        <taxon>Primates</taxon>
        <taxon>Haplorrhini</taxon>
        <taxon>Catarrhini</taxon>
        <taxon>Hominidae</taxon>
        <taxon>Homo</taxon>
    </lineage>
</organism>
<keyword id="KW-0002">3D-structure</keyword>
<keyword id="KW-0010">Activator</keyword>
<keyword id="KW-0025">Alternative splicing</keyword>
<keyword id="KW-0217">Developmental protein</keyword>
<keyword id="KW-0238">DNA-binding</keyword>
<keyword id="KW-0479">Metal-binding</keyword>
<keyword id="KW-0539">Nucleus</keyword>
<keyword id="KW-1267">Proteomics identification</keyword>
<keyword id="KW-0675">Receptor</keyword>
<keyword id="KW-1185">Reference proteome</keyword>
<keyword id="KW-0678">Repressor</keyword>
<keyword id="KW-0804">Transcription</keyword>
<keyword id="KW-0805">Transcription regulation</keyword>
<keyword id="KW-0862">Zinc</keyword>
<keyword id="KW-0863">Zinc-finger</keyword>